<dbReference type="EC" id="1.3.99.4" evidence="3"/>
<dbReference type="EMBL" id="U59422">
    <property type="protein sequence ID" value="AAB02831.1"/>
    <property type="molecule type" value="Genomic_DNA"/>
</dbReference>
<dbReference type="PIR" id="PC1242">
    <property type="entry name" value="PC1242"/>
</dbReference>
<dbReference type="SMR" id="Q04616"/>
<dbReference type="UniPathway" id="UPA00722"/>
<dbReference type="GO" id="GO:0005886">
    <property type="term" value="C:plasma membrane"/>
    <property type="evidence" value="ECO:0000250"/>
    <property type="project" value="UniProtKB"/>
</dbReference>
<dbReference type="GO" id="GO:0047571">
    <property type="term" value="F:3-oxosteroid 1-dehydrogenase activity"/>
    <property type="evidence" value="ECO:0000314"/>
    <property type="project" value="UniProtKB"/>
</dbReference>
<dbReference type="GO" id="GO:0006706">
    <property type="term" value="P:steroid catabolic process"/>
    <property type="evidence" value="ECO:0007669"/>
    <property type="project" value="UniProtKB-UniPathway"/>
</dbReference>
<dbReference type="GO" id="GO:0008202">
    <property type="term" value="P:steroid metabolic process"/>
    <property type="evidence" value="ECO:0000314"/>
    <property type="project" value="UniProtKB"/>
</dbReference>
<dbReference type="FunFam" id="3.50.50.60:FF:000208">
    <property type="entry name" value="3-ketosteroid dehydrogenase"/>
    <property type="match status" value="1"/>
</dbReference>
<dbReference type="Gene3D" id="3.50.50.60">
    <property type="entry name" value="FAD/NAD(P)-binding domain"/>
    <property type="match status" value="2"/>
</dbReference>
<dbReference type="Gene3D" id="3.90.700.10">
    <property type="entry name" value="Succinate dehydrogenase/fumarate reductase flavoprotein, catalytic domain"/>
    <property type="match status" value="1"/>
</dbReference>
<dbReference type="InterPro" id="IPR003953">
    <property type="entry name" value="FAD-dep_OxRdtase_2_FAD-bd"/>
</dbReference>
<dbReference type="InterPro" id="IPR050315">
    <property type="entry name" value="FAD-oxidoreductase_2"/>
</dbReference>
<dbReference type="InterPro" id="IPR036188">
    <property type="entry name" value="FAD/NAD-bd_sf"/>
</dbReference>
<dbReference type="InterPro" id="IPR027477">
    <property type="entry name" value="Succ_DH/fumarate_Rdtase_cat_sf"/>
</dbReference>
<dbReference type="PANTHER" id="PTHR43400:SF10">
    <property type="entry name" value="3-OXOSTEROID 1-DEHYDROGENASE"/>
    <property type="match status" value="1"/>
</dbReference>
<dbReference type="PANTHER" id="PTHR43400">
    <property type="entry name" value="FUMARATE REDUCTASE"/>
    <property type="match status" value="1"/>
</dbReference>
<dbReference type="Pfam" id="PF00890">
    <property type="entry name" value="FAD_binding_2"/>
    <property type="match status" value="1"/>
</dbReference>
<dbReference type="SUPFAM" id="SSF51905">
    <property type="entry name" value="FAD/NAD(P)-binding domain"/>
    <property type="match status" value="1"/>
</dbReference>
<sequence length="507" mass="54005">MQDWTSECDLLVVGSGGGALTGAYTAAAQGLTTIVLEKTDRFGGTSAYSGASIWLPGTQVQERAGLPDSTENARSYLRALLGDAESERQDAYVETAPAVVALLEQNPNIEFEFRAFPDYYKAEGRMDTGRSINPLDLDPADIGDLAGRCVRNCTKTDRMDHAPGRMIGGRALIAVSAAVQSTARQNFAPESVLTSLIVEDGRVVGGLRSNPRYRQRIKANRGVLMHAGGGFEGNAEMREQAGTPGKAIWSMGPSGPTPATRSPPELAGRRRNSLARSGVVLPRGRAARRRRLHGRVRGGLVVDSPGSVPQRVASVRPVRTSHGCSPDDNGSAVPSFMIFDSREVTDCPPSASRTRPPPSTSKPEPGSVPTLSKNSLPRPDYRPERIAQHCRKVQRCRKLGVDEEFHRGEDPYDAFFCPPNGGANAALTAIENGPFYAARDRLSDLGTKGGLVTDVNGRVLRADGSAIDGLYAAGNTSASVAPFYPGPGVPLGTAMVFSYRAAQDMAK</sequence>
<organism>
    <name type="scientific">Rhodococcus opacus</name>
    <name type="common">Nocardia opaca</name>
    <dbReference type="NCBI Taxonomy" id="37919"/>
    <lineage>
        <taxon>Bacteria</taxon>
        <taxon>Bacillati</taxon>
        <taxon>Actinomycetota</taxon>
        <taxon>Actinomycetes</taxon>
        <taxon>Mycobacteriales</taxon>
        <taxon>Nocardiaceae</taxon>
        <taxon>Rhodococcus</taxon>
    </lineage>
</organism>
<evidence type="ECO:0000250" key="1"/>
<evidence type="ECO:0000256" key="2">
    <source>
        <dbReference type="SAM" id="MobiDB-lite"/>
    </source>
</evidence>
<evidence type="ECO:0000269" key="3">
    <source>
    </source>
</evidence>
<evidence type="ECO:0000303" key="4">
    <source>
    </source>
</evidence>
<evidence type="ECO:0000305" key="5"/>
<evidence type="ECO:0000305" key="6">
    <source>
    </source>
</evidence>
<name>3O1D_RHOOP</name>
<feature type="initiator methionine" description="Removed" evidence="3">
    <location>
        <position position="1"/>
    </location>
</feature>
<feature type="chain" id="PRO_0000064377" description="3-oxosteroid 1-dehydrogenase">
    <location>
        <begin position="2"/>
        <end position="507"/>
    </location>
</feature>
<feature type="region of interest" description="Disordered" evidence="2">
    <location>
        <begin position="299"/>
        <end position="385"/>
    </location>
</feature>
<feature type="binding site" evidence="1">
    <location>
        <begin position="9"/>
        <end position="38"/>
    </location>
    <ligand>
        <name>FAD</name>
        <dbReference type="ChEBI" id="CHEBI:57692"/>
    </ligand>
</feature>
<comment type="function">
    <text evidence="3">Catalyzes the elimination of the C-1 and C-2 hydrogen atoms of the A-ring from the polycyclic ring structure of 3-ketosteroids.</text>
</comment>
<comment type="catalytic activity">
    <reaction evidence="3">
        <text>a 3-oxosteroid + A = a 3-oxo-Delta(1)-steroid + AH2</text>
        <dbReference type="Rhea" id="RHEA:13329"/>
        <dbReference type="ChEBI" id="CHEBI:13193"/>
        <dbReference type="ChEBI" id="CHEBI:17499"/>
        <dbReference type="ChEBI" id="CHEBI:20156"/>
        <dbReference type="ChEBI" id="CHEBI:47788"/>
        <dbReference type="EC" id="1.3.99.4"/>
    </reaction>
</comment>
<comment type="cofactor">
    <cofactor evidence="1">
        <name>FAD</name>
        <dbReference type="ChEBI" id="CHEBI:57692"/>
    </cofactor>
</comment>
<comment type="pathway">
    <text evidence="6">Lipid metabolism; steroid degradation.</text>
</comment>
<comment type="subcellular location">
    <subcellularLocation>
        <location evidence="1">Cell membrane</location>
        <topology evidence="1">Peripheral membrane protein</topology>
    </subcellularLocation>
</comment>
<comment type="induction">
    <text evidence="3">By steroids.</text>
</comment>
<comment type="similarity">
    <text evidence="5">Belongs to the FAD-dependent oxidoreductase 2 family. 3-oxosteroid dehydrogenase subfamily.</text>
</comment>
<protein>
    <recommendedName>
        <fullName>3-oxosteroid 1-dehydrogenase</fullName>
        <ecNumber evidence="3">1.3.99.4</ecNumber>
    </recommendedName>
    <alternativeName>
        <fullName evidence="4">Steroid 1:2-dehydrogenase</fullName>
    </alternativeName>
</protein>
<proteinExistence type="evidence at protein level"/>
<keyword id="KW-1003">Cell membrane</keyword>
<keyword id="KW-0903">Direct protein sequencing</keyword>
<keyword id="KW-0274">FAD</keyword>
<keyword id="KW-0285">Flavoprotein</keyword>
<keyword id="KW-0443">Lipid metabolism</keyword>
<keyword id="KW-0472">Membrane</keyword>
<keyword id="KW-0560">Oxidoreductase</keyword>
<keyword id="KW-0753">Steroid metabolism</keyword>
<accession>Q04616</accession>
<reference key="1">
    <citation type="submission" date="1996-06" db="EMBL/GenBank/DDBJ databases">
        <authorList>
            <person name="Drobnic K."/>
        </authorList>
    </citation>
    <scope>NUCLEOTIDE SEQUENCE [GENOMIC DNA]</scope>
    <source>
        <strain>IMET 7030</strain>
    </source>
</reference>
<reference key="2">
    <citation type="journal article" date="1993" name="Biochem. Biophys. Res. Commun.">
        <title>Improved purification of steroid 1:2-dehydrogenase from Nocardia opaca and partial characterization of its cloned gene sequence.</title>
        <authorList>
            <person name="Drobnic K."/>
            <person name="Krizaj I."/>
            <person name="Gubensek F."/>
            <person name="Komel R."/>
        </authorList>
    </citation>
    <scope>NUCLEOTIDE SEQUENCE [GENOMIC DNA] OF 1-57</scope>
    <scope>PROTEIN SEQUENCE OF 2-15</scope>
    <scope>FUNCTION AS A KETOSTEROID DEHYDROGENASE</scope>
    <scope>CATALYTIC ACTIVITY</scope>
    <scope>INDUCTION</scope>
</reference>